<accession>O73853</accession>
<keyword id="KW-0349">Heme</keyword>
<keyword id="KW-0408">Iron</keyword>
<keyword id="KW-0443">Lipid metabolism</keyword>
<keyword id="KW-0456">Lyase</keyword>
<keyword id="KW-0472">Membrane</keyword>
<keyword id="KW-0479">Metal-binding</keyword>
<keyword id="KW-0503">Monooxygenase</keyword>
<keyword id="KW-0560">Oxidoreductase</keyword>
<keyword id="KW-0755">Steroidogenesis</keyword>
<proteinExistence type="evidence at transcript level"/>
<feature type="chain" id="PRO_0000051945" description="Steroid 17-alpha-hydroxylase/17,20 lyase">
    <location>
        <begin position="1"/>
        <end position="514"/>
    </location>
</feature>
<feature type="binding site" description="axial binding residue" evidence="1">
    <location>
        <position position="445"/>
    </location>
    <ligand>
        <name>heme</name>
        <dbReference type="ChEBI" id="CHEBI:30413"/>
    </ligand>
    <ligandPart>
        <name>Fe</name>
        <dbReference type="ChEBI" id="CHEBI:18248"/>
    </ligandPart>
</feature>
<name>CP17A_ICTPU</name>
<evidence type="ECO:0000250" key="1"/>
<evidence type="ECO:0000250" key="2">
    <source>
        <dbReference type="UniProtKB" id="P05093"/>
    </source>
</evidence>
<evidence type="ECO:0000305" key="3"/>
<sequence length="514" mass="58134">MGWLICFCVFAAIIIVALYLRKIHGFLVDDRAPPNLPSLPIIGSLLSINSNSPPHIFFQQLQKKYGDIYSLDMGSNRVIIVNNHHHAKEVLLRKGKIFAGRPRTVTTDILTRDGKDIAFGDYSATWKFHRKIVHGALCMFGEGTASIEKIICREASSMCEILTNLQSSAADLAPELTRAVTNVVCTLCFSSSYKRGDPEFEAMLKYSQGIVDTVAKDSLVDIFPWLQLFPNEDLRILRRCVSIRDKLLQKKYEEHKADFSDNIQRDLFDALLRAKNSSENNNTSTQDVGLTDDHLLMTVGDIFGAGVETTTTVLKWSILYLIHHPQVQRKIQEELDAKIGRDRHPQVNDRGNLPYLEATIREVLRIRPVSPLLIPHVALSDANIGEYTVQKGTRVIVNLWSLHHDEKEWKNPELFNPERFLNEEGNSLCCPSLSYLPFGAGVRVCLGEALAKLELFLFLSWILQRFTLEVPGGQPLPELQGKFRVVLQPQKYKVIARLRTGWEKSLQSQESESG</sequence>
<gene>
    <name type="primary">cyp17a1</name>
    <name type="synonym">cyp17</name>
</gene>
<protein>
    <recommendedName>
        <fullName>Steroid 17-alpha-hydroxylase/17,20 lyase</fullName>
        <ecNumber evidence="2">1.14.14.19</ecNumber>
        <ecNumber evidence="2">1.14.14.32</ecNumber>
    </recommendedName>
    <alternativeName>
        <fullName>17-alpha-hydroxyprogesterone aldolase</fullName>
    </alternativeName>
    <alternativeName>
        <fullName>CYPXVII</fullName>
    </alternativeName>
    <alternativeName>
        <fullName>Cytochrome P450 17A1</fullName>
    </alternativeName>
    <alternativeName>
        <fullName>Cytochrome P450-C17</fullName>
        <shortName>Cytochrome P450c17</shortName>
    </alternativeName>
</protein>
<organism>
    <name type="scientific">Ictalurus punctatus</name>
    <name type="common">Channel catfish</name>
    <name type="synonym">Silurus punctatus</name>
    <dbReference type="NCBI Taxonomy" id="7998"/>
    <lineage>
        <taxon>Eukaryota</taxon>
        <taxon>Metazoa</taxon>
        <taxon>Chordata</taxon>
        <taxon>Craniata</taxon>
        <taxon>Vertebrata</taxon>
        <taxon>Euteleostomi</taxon>
        <taxon>Actinopterygii</taxon>
        <taxon>Neopterygii</taxon>
        <taxon>Teleostei</taxon>
        <taxon>Ostariophysi</taxon>
        <taxon>Siluriformes</taxon>
        <taxon>Ictaluridae</taxon>
        <taxon>Ictalurus</taxon>
    </lineage>
</organism>
<reference key="1">
    <citation type="submission" date="1998-05" db="EMBL/GenBank/DDBJ databases">
        <title>Isolation and heterologous expression of the cDNA encoding the cytochrome P450 17-hydroxylase from the channel catfish (Ictalurus punctatus).</title>
        <authorList>
            <person name="Trant J.M."/>
            <person name="Berard C."/>
            <person name="Byrne B.J."/>
            <person name="Wunder J."/>
        </authorList>
    </citation>
    <scope>NUCLEOTIDE SEQUENCE [MRNA]</scope>
    <source>
        <tissue>Ovary</tissue>
    </source>
</reference>
<comment type="function">
    <text>Conversion of pregnenolone and progesterone to their 17-alpha-hydroxylated products and subsequently to dehydroepiandrosterone (DHEA) and androstenedione. Catalyzes both the 17-alpha-hydroxylation and the 17,20-lyase reaction.</text>
</comment>
<comment type="catalytic activity">
    <reaction evidence="2">
        <text>a C21-steroid + reduced [NADPH--hemoprotein reductase] + O2 = a 17alpha-hydroxy-C21-steroid + oxidized [NADPH--hemoprotein reductase] + H2O + H(+)</text>
        <dbReference type="Rhea" id="RHEA:65760"/>
        <dbReference type="Rhea" id="RHEA-COMP:11964"/>
        <dbReference type="Rhea" id="RHEA-COMP:11965"/>
        <dbReference type="ChEBI" id="CHEBI:15377"/>
        <dbReference type="ChEBI" id="CHEBI:15378"/>
        <dbReference type="ChEBI" id="CHEBI:15379"/>
        <dbReference type="ChEBI" id="CHEBI:57618"/>
        <dbReference type="ChEBI" id="CHEBI:58210"/>
        <dbReference type="ChEBI" id="CHEBI:61313"/>
        <dbReference type="ChEBI" id="CHEBI:138141"/>
        <dbReference type="EC" id="1.14.14.19"/>
    </reaction>
</comment>
<comment type="catalytic activity">
    <reaction evidence="2">
        <text>17alpha-hydroxyprogesterone + reduced [NADPH--hemoprotein reductase] + O2 = androst-4-ene-3,17-dione + acetate + oxidized [NADPH--hemoprotein reductase] + H2O + 2 H(+)</text>
        <dbReference type="Rhea" id="RHEA:14753"/>
        <dbReference type="Rhea" id="RHEA-COMP:11964"/>
        <dbReference type="Rhea" id="RHEA-COMP:11965"/>
        <dbReference type="ChEBI" id="CHEBI:15377"/>
        <dbReference type="ChEBI" id="CHEBI:15378"/>
        <dbReference type="ChEBI" id="CHEBI:15379"/>
        <dbReference type="ChEBI" id="CHEBI:16422"/>
        <dbReference type="ChEBI" id="CHEBI:17252"/>
        <dbReference type="ChEBI" id="CHEBI:30089"/>
        <dbReference type="ChEBI" id="CHEBI:57618"/>
        <dbReference type="ChEBI" id="CHEBI:58210"/>
        <dbReference type="EC" id="1.14.14.32"/>
    </reaction>
</comment>
<comment type="catalytic activity">
    <reaction evidence="2">
        <text>17alpha-hydroxypregnenolone + reduced [NADPH--hemoprotein reductase] + O2 = 3beta-hydroxyandrost-5-en-17-one + acetate + oxidized [NADPH--hemoprotein reductase] + H2O + 2 H(+)</text>
        <dbReference type="Rhea" id="RHEA:50244"/>
        <dbReference type="Rhea" id="RHEA-COMP:11964"/>
        <dbReference type="Rhea" id="RHEA-COMP:11965"/>
        <dbReference type="ChEBI" id="CHEBI:15377"/>
        <dbReference type="ChEBI" id="CHEBI:15378"/>
        <dbReference type="ChEBI" id="CHEBI:15379"/>
        <dbReference type="ChEBI" id="CHEBI:28689"/>
        <dbReference type="ChEBI" id="CHEBI:28750"/>
        <dbReference type="ChEBI" id="CHEBI:30089"/>
        <dbReference type="ChEBI" id="CHEBI:57618"/>
        <dbReference type="ChEBI" id="CHEBI:58210"/>
        <dbReference type="EC" id="1.14.14.32"/>
    </reaction>
</comment>
<comment type="cofactor">
    <cofactor evidence="1">
        <name>heme</name>
        <dbReference type="ChEBI" id="CHEBI:30413"/>
    </cofactor>
</comment>
<comment type="pathway">
    <text>Lipid metabolism; steroid biosynthesis.</text>
</comment>
<comment type="subcellular location">
    <subcellularLocation>
        <location evidence="3">Membrane</location>
    </subcellularLocation>
</comment>
<comment type="similarity">
    <text evidence="3">Belongs to the cytochrome P450 family.</text>
</comment>
<dbReference type="EC" id="1.14.14.19" evidence="2"/>
<dbReference type="EC" id="1.14.14.32" evidence="2"/>
<dbReference type="EMBL" id="AF063837">
    <property type="protein sequence ID" value="AAC16551.1"/>
    <property type="molecule type" value="mRNA"/>
</dbReference>
<dbReference type="RefSeq" id="NP_001187242.1">
    <property type="nucleotide sequence ID" value="NM_001200313.1"/>
</dbReference>
<dbReference type="SMR" id="O73853"/>
<dbReference type="STRING" id="7998.ENSIPUP00000036506"/>
<dbReference type="GeneID" id="100313515"/>
<dbReference type="KEGG" id="ipu:100313515"/>
<dbReference type="CTD" id="105601846"/>
<dbReference type="OrthoDB" id="1470350at2759"/>
<dbReference type="UniPathway" id="UPA00062"/>
<dbReference type="Proteomes" id="UP000221080">
    <property type="component" value="Chromosome 3"/>
</dbReference>
<dbReference type="GO" id="GO:0016020">
    <property type="term" value="C:membrane"/>
    <property type="evidence" value="ECO:0007669"/>
    <property type="project" value="UniProtKB-SubCell"/>
</dbReference>
<dbReference type="GO" id="GO:0020037">
    <property type="term" value="F:heme binding"/>
    <property type="evidence" value="ECO:0007669"/>
    <property type="project" value="InterPro"/>
</dbReference>
<dbReference type="GO" id="GO:0005506">
    <property type="term" value="F:iron ion binding"/>
    <property type="evidence" value="ECO:0007669"/>
    <property type="project" value="InterPro"/>
</dbReference>
<dbReference type="GO" id="GO:0016829">
    <property type="term" value="F:lyase activity"/>
    <property type="evidence" value="ECO:0007669"/>
    <property type="project" value="UniProtKB-KW"/>
</dbReference>
<dbReference type="GO" id="GO:0004508">
    <property type="term" value="F:steroid 17-alpha-monooxygenase activity"/>
    <property type="evidence" value="ECO:0007669"/>
    <property type="project" value="UniProtKB-EC"/>
</dbReference>
<dbReference type="GO" id="GO:0042446">
    <property type="term" value="P:hormone biosynthetic process"/>
    <property type="evidence" value="ECO:0007669"/>
    <property type="project" value="TreeGrafter"/>
</dbReference>
<dbReference type="GO" id="GO:0042448">
    <property type="term" value="P:progesterone metabolic process"/>
    <property type="evidence" value="ECO:0007669"/>
    <property type="project" value="TreeGrafter"/>
</dbReference>
<dbReference type="GO" id="GO:0006694">
    <property type="term" value="P:steroid biosynthetic process"/>
    <property type="evidence" value="ECO:0007669"/>
    <property type="project" value="UniProtKB-UniPathway"/>
</dbReference>
<dbReference type="CDD" id="cd20673">
    <property type="entry name" value="CYP17A1"/>
    <property type="match status" value="1"/>
</dbReference>
<dbReference type="FunFam" id="1.10.630.10:FF:000002">
    <property type="entry name" value="Cytochrome P450 1A1"/>
    <property type="match status" value="1"/>
</dbReference>
<dbReference type="Gene3D" id="1.10.630.10">
    <property type="entry name" value="Cytochrome P450"/>
    <property type="match status" value="1"/>
</dbReference>
<dbReference type="InterPro" id="IPR001128">
    <property type="entry name" value="Cyt_P450"/>
</dbReference>
<dbReference type="InterPro" id="IPR017972">
    <property type="entry name" value="Cyt_P450_CS"/>
</dbReference>
<dbReference type="InterPro" id="IPR002401">
    <property type="entry name" value="Cyt_P450_E_grp-I"/>
</dbReference>
<dbReference type="InterPro" id="IPR036396">
    <property type="entry name" value="Cyt_P450_sf"/>
</dbReference>
<dbReference type="PANTHER" id="PTHR24289:SF14">
    <property type="entry name" value="CYTOCHROME P450, FAMILY 17, SUBFAMILY A, POLYPEPTIDE 1"/>
    <property type="match status" value="1"/>
</dbReference>
<dbReference type="PANTHER" id="PTHR24289">
    <property type="entry name" value="STEROID 17-ALPHA-HYDROXYLASE/17,20 LYASE"/>
    <property type="match status" value="1"/>
</dbReference>
<dbReference type="Pfam" id="PF00067">
    <property type="entry name" value="p450"/>
    <property type="match status" value="1"/>
</dbReference>
<dbReference type="PRINTS" id="PR00463">
    <property type="entry name" value="EP450I"/>
</dbReference>
<dbReference type="PRINTS" id="PR00385">
    <property type="entry name" value="P450"/>
</dbReference>
<dbReference type="SUPFAM" id="SSF48264">
    <property type="entry name" value="Cytochrome P450"/>
    <property type="match status" value="1"/>
</dbReference>
<dbReference type="PROSITE" id="PS00086">
    <property type="entry name" value="CYTOCHROME_P450"/>
    <property type="match status" value="1"/>
</dbReference>